<organism>
    <name type="scientific">Bacillus cereus (strain ZK / E33L)</name>
    <dbReference type="NCBI Taxonomy" id="288681"/>
    <lineage>
        <taxon>Bacteria</taxon>
        <taxon>Bacillati</taxon>
        <taxon>Bacillota</taxon>
        <taxon>Bacilli</taxon>
        <taxon>Bacillales</taxon>
        <taxon>Bacillaceae</taxon>
        <taxon>Bacillus</taxon>
        <taxon>Bacillus cereus group</taxon>
    </lineage>
</organism>
<gene>
    <name evidence="1" type="primary">cmk</name>
    <name type="ordered locus">BCE33L1378</name>
</gene>
<proteinExistence type="inferred from homology"/>
<feature type="chain" id="PRO_0000131875" description="Cytidylate kinase">
    <location>
        <begin position="1"/>
        <end position="225"/>
    </location>
</feature>
<feature type="binding site" evidence="1">
    <location>
        <begin position="11"/>
        <end position="19"/>
    </location>
    <ligand>
        <name>ATP</name>
        <dbReference type="ChEBI" id="CHEBI:30616"/>
    </ligand>
</feature>
<dbReference type="EC" id="2.7.4.25" evidence="1"/>
<dbReference type="EMBL" id="CP000001">
    <property type="protein sequence ID" value="AAU18871.1"/>
    <property type="molecule type" value="Genomic_DNA"/>
</dbReference>
<dbReference type="RefSeq" id="WP_000361264.1">
    <property type="nucleotide sequence ID" value="NZ_CP009968.1"/>
</dbReference>
<dbReference type="SMR" id="Q63DN5"/>
<dbReference type="GeneID" id="93009543"/>
<dbReference type="KEGG" id="bcz:BCE33L1378"/>
<dbReference type="PATRIC" id="fig|288681.22.peg.4173"/>
<dbReference type="Proteomes" id="UP000002612">
    <property type="component" value="Chromosome"/>
</dbReference>
<dbReference type="GO" id="GO:0005829">
    <property type="term" value="C:cytosol"/>
    <property type="evidence" value="ECO:0007669"/>
    <property type="project" value="TreeGrafter"/>
</dbReference>
<dbReference type="GO" id="GO:0005524">
    <property type="term" value="F:ATP binding"/>
    <property type="evidence" value="ECO:0007669"/>
    <property type="project" value="UniProtKB-UniRule"/>
</dbReference>
<dbReference type="GO" id="GO:0036430">
    <property type="term" value="F:CMP kinase activity"/>
    <property type="evidence" value="ECO:0007669"/>
    <property type="project" value="RHEA"/>
</dbReference>
<dbReference type="GO" id="GO:0036431">
    <property type="term" value="F:dCMP kinase activity"/>
    <property type="evidence" value="ECO:0007669"/>
    <property type="project" value="RHEA"/>
</dbReference>
<dbReference type="GO" id="GO:0015949">
    <property type="term" value="P:nucleobase-containing small molecule interconversion"/>
    <property type="evidence" value="ECO:0007669"/>
    <property type="project" value="TreeGrafter"/>
</dbReference>
<dbReference type="GO" id="GO:0006220">
    <property type="term" value="P:pyrimidine nucleotide metabolic process"/>
    <property type="evidence" value="ECO:0007669"/>
    <property type="project" value="UniProtKB-UniRule"/>
</dbReference>
<dbReference type="CDD" id="cd02020">
    <property type="entry name" value="CMPK"/>
    <property type="match status" value="1"/>
</dbReference>
<dbReference type="FunFam" id="3.40.50.300:FF:000484">
    <property type="entry name" value="Cytidylate kinase"/>
    <property type="match status" value="1"/>
</dbReference>
<dbReference type="Gene3D" id="3.40.50.300">
    <property type="entry name" value="P-loop containing nucleotide triphosphate hydrolases"/>
    <property type="match status" value="1"/>
</dbReference>
<dbReference type="HAMAP" id="MF_00238">
    <property type="entry name" value="Cytidyl_kinase_type1"/>
    <property type="match status" value="1"/>
</dbReference>
<dbReference type="InterPro" id="IPR003136">
    <property type="entry name" value="Cytidylate_kin"/>
</dbReference>
<dbReference type="InterPro" id="IPR011994">
    <property type="entry name" value="Cytidylate_kinase_dom"/>
</dbReference>
<dbReference type="InterPro" id="IPR027417">
    <property type="entry name" value="P-loop_NTPase"/>
</dbReference>
<dbReference type="NCBIfam" id="TIGR00017">
    <property type="entry name" value="cmk"/>
    <property type="match status" value="1"/>
</dbReference>
<dbReference type="PANTHER" id="PTHR21299:SF2">
    <property type="entry name" value="CYTIDYLATE KINASE"/>
    <property type="match status" value="1"/>
</dbReference>
<dbReference type="PANTHER" id="PTHR21299">
    <property type="entry name" value="CYTIDYLATE KINASE/PANTOATE-BETA-ALANINE LIGASE"/>
    <property type="match status" value="1"/>
</dbReference>
<dbReference type="Pfam" id="PF02224">
    <property type="entry name" value="Cytidylate_kin"/>
    <property type="match status" value="1"/>
</dbReference>
<dbReference type="SUPFAM" id="SSF52540">
    <property type="entry name" value="P-loop containing nucleoside triphosphate hydrolases"/>
    <property type="match status" value="1"/>
</dbReference>
<reference key="1">
    <citation type="journal article" date="2006" name="J. Bacteriol.">
        <title>Pathogenomic sequence analysis of Bacillus cereus and Bacillus thuringiensis isolates closely related to Bacillus anthracis.</title>
        <authorList>
            <person name="Han C.S."/>
            <person name="Xie G."/>
            <person name="Challacombe J.F."/>
            <person name="Altherr M.R."/>
            <person name="Bhotika S.S."/>
            <person name="Bruce D."/>
            <person name="Campbell C.S."/>
            <person name="Campbell M.L."/>
            <person name="Chen J."/>
            <person name="Chertkov O."/>
            <person name="Cleland C."/>
            <person name="Dimitrijevic M."/>
            <person name="Doggett N.A."/>
            <person name="Fawcett J.J."/>
            <person name="Glavina T."/>
            <person name="Goodwin L.A."/>
            <person name="Hill K.K."/>
            <person name="Hitchcock P."/>
            <person name="Jackson P.J."/>
            <person name="Keim P."/>
            <person name="Kewalramani A.R."/>
            <person name="Longmire J."/>
            <person name="Lucas S."/>
            <person name="Malfatti S."/>
            <person name="McMurry K."/>
            <person name="Meincke L.J."/>
            <person name="Misra M."/>
            <person name="Moseman B.L."/>
            <person name="Mundt M."/>
            <person name="Munk A.C."/>
            <person name="Okinaka R.T."/>
            <person name="Parson-Quintana B."/>
            <person name="Reilly L.P."/>
            <person name="Richardson P."/>
            <person name="Robinson D.L."/>
            <person name="Rubin E."/>
            <person name="Saunders E."/>
            <person name="Tapia R."/>
            <person name="Tesmer J.G."/>
            <person name="Thayer N."/>
            <person name="Thompson L.S."/>
            <person name="Tice H."/>
            <person name="Ticknor L.O."/>
            <person name="Wills P.L."/>
            <person name="Brettin T.S."/>
            <person name="Gilna P."/>
        </authorList>
    </citation>
    <scope>NUCLEOTIDE SEQUENCE [LARGE SCALE GENOMIC DNA]</scope>
    <source>
        <strain>ZK / E33L</strain>
    </source>
</reference>
<name>KCY_BACCZ</name>
<evidence type="ECO:0000255" key="1">
    <source>
        <dbReference type="HAMAP-Rule" id="MF_00238"/>
    </source>
</evidence>
<comment type="catalytic activity">
    <reaction evidence="1">
        <text>CMP + ATP = CDP + ADP</text>
        <dbReference type="Rhea" id="RHEA:11600"/>
        <dbReference type="ChEBI" id="CHEBI:30616"/>
        <dbReference type="ChEBI" id="CHEBI:58069"/>
        <dbReference type="ChEBI" id="CHEBI:60377"/>
        <dbReference type="ChEBI" id="CHEBI:456216"/>
        <dbReference type="EC" id="2.7.4.25"/>
    </reaction>
</comment>
<comment type="catalytic activity">
    <reaction evidence="1">
        <text>dCMP + ATP = dCDP + ADP</text>
        <dbReference type="Rhea" id="RHEA:25094"/>
        <dbReference type="ChEBI" id="CHEBI:30616"/>
        <dbReference type="ChEBI" id="CHEBI:57566"/>
        <dbReference type="ChEBI" id="CHEBI:58593"/>
        <dbReference type="ChEBI" id="CHEBI:456216"/>
        <dbReference type="EC" id="2.7.4.25"/>
    </reaction>
</comment>
<comment type="subcellular location">
    <subcellularLocation>
        <location evidence="1">Cytoplasm</location>
    </subcellularLocation>
</comment>
<comment type="similarity">
    <text evidence="1">Belongs to the cytidylate kinase family. Type 1 subfamily.</text>
</comment>
<keyword id="KW-0067">ATP-binding</keyword>
<keyword id="KW-0963">Cytoplasm</keyword>
<keyword id="KW-0418">Kinase</keyword>
<keyword id="KW-0547">Nucleotide-binding</keyword>
<keyword id="KW-0808">Transferase</keyword>
<accession>Q63DN5</accession>
<protein>
    <recommendedName>
        <fullName evidence="1">Cytidylate kinase</fullName>
        <shortName evidence="1">CK</shortName>
        <ecNumber evidence="1">2.7.4.25</ecNumber>
    </recommendedName>
    <alternativeName>
        <fullName evidence="1">Cytidine monophosphate kinase</fullName>
        <shortName evidence="1">CMP kinase</shortName>
    </alternativeName>
</protein>
<sequence length="225" mass="25259">MDKRISIAIDGPAAAGKSTVAKVVAKKLSYVYIDTGAMYRTITYAALEQKVDIENEEQLMEVVKNVKIEFQQGENTQLVFLNGQDVSEVIRTPEVTNRVSIVAKHRLVREEMVRRQQELAEKGGVVMDGRDIGTHVLPDAEVKIFMLASVEERAERRHLENMNKGFDSNLEQLKEEIAQRDKLDSEREVSPLKKADDALELDTTSLSIEEVVQKIMGIVSGVFAK</sequence>